<dbReference type="EMBL" id="BX571856">
    <property type="protein sequence ID" value="CAG39311.1"/>
    <property type="molecule type" value="Genomic_DNA"/>
</dbReference>
<dbReference type="RefSeq" id="WP_000549309.1">
    <property type="nucleotide sequence ID" value="NC_002952.2"/>
</dbReference>
<dbReference type="SMR" id="Q6GK24"/>
<dbReference type="KEGG" id="sar:SAR0284"/>
<dbReference type="HOGENOM" id="CLU_003134_2_1_9"/>
<dbReference type="Proteomes" id="UP000000596">
    <property type="component" value="Chromosome"/>
</dbReference>
<dbReference type="GO" id="GO:0005886">
    <property type="term" value="C:plasma membrane"/>
    <property type="evidence" value="ECO:0007669"/>
    <property type="project" value="UniProtKB-SubCell"/>
</dbReference>
<dbReference type="GO" id="GO:0005524">
    <property type="term" value="F:ATP binding"/>
    <property type="evidence" value="ECO:0007669"/>
    <property type="project" value="UniProtKB-KW"/>
</dbReference>
<dbReference type="GO" id="GO:0003677">
    <property type="term" value="F:DNA binding"/>
    <property type="evidence" value="ECO:0007669"/>
    <property type="project" value="InterPro"/>
</dbReference>
<dbReference type="CDD" id="cd01127">
    <property type="entry name" value="TrwB_TraG_TraD_VirD4"/>
    <property type="match status" value="1"/>
</dbReference>
<dbReference type="Gene3D" id="2.60.200.20">
    <property type="match status" value="2"/>
</dbReference>
<dbReference type="Gene3D" id="3.40.50.300">
    <property type="entry name" value="P-loop containing nucleotide triphosphate hydrolases"/>
    <property type="match status" value="2"/>
</dbReference>
<dbReference type="InterPro" id="IPR023839">
    <property type="entry name" value="Firmicutes_EssC_C"/>
</dbReference>
<dbReference type="InterPro" id="IPR022206">
    <property type="entry name" value="Firmicutes_EssC_N"/>
</dbReference>
<dbReference type="InterPro" id="IPR050206">
    <property type="entry name" value="FtsK/SpoIIIE/SftA"/>
</dbReference>
<dbReference type="InterPro" id="IPR002543">
    <property type="entry name" value="FtsK_dom"/>
</dbReference>
<dbReference type="InterPro" id="IPR027417">
    <property type="entry name" value="P-loop_NTPase"/>
</dbReference>
<dbReference type="InterPro" id="IPR008984">
    <property type="entry name" value="SMAD_FHA_dom_sf"/>
</dbReference>
<dbReference type="NCBIfam" id="TIGR03928">
    <property type="entry name" value="T7_EssCb_Firm"/>
    <property type="match status" value="1"/>
</dbReference>
<dbReference type="PANTHER" id="PTHR22683:SF41">
    <property type="entry name" value="DNA TRANSLOCASE FTSK"/>
    <property type="match status" value="1"/>
</dbReference>
<dbReference type="PANTHER" id="PTHR22683">
    <property type="entry name" value="SPORULATION PROTEIN RELATED"/>
    <property type="match status" value="1"/>
</dbReference>
<dbReference type="Pfam" id="PF01580">
    <property type="entry name" value="FtsK_SpoIIIE"/>
    <property type="match status" value="2"/>
</dbReference>
<dbReference type="Pfam" id="PF12538">
    <property type="entry name" value="FtsK_SpoIIIE_N"/>
    <property type="match status" value="1"/>
</dbReference>
<dbReference type="SUPFAM" id="SSF52540">
    <property type="entry name" value="P-loop containing nucleoside triphosphate hydrolases"/>
    <property type="match status" value="2"/>
</dbReference>
<dbReference type="SUPFAM" id="SSF49879">
    <property type="entry name" value="SMAD/FHA domain"/>
    <property type="match status" value="2"/>
</dbReference>
<dbReference type="PROSITE" id="PS50901">
    <property type="entry name" value="FTSK"/>
    <property type="match status" value="2"/>
</dbReference>
<proteinExistence type="inferred from homology"/>
<organism>
    <name type="scientific">Staphylococcus aureus (strain MRSA252)</name>
    <dbReference type="NCBI Taxonomy" id="282458"/>
    <lineage>
        <taxon>Bacteria</taxon>
        <taxon>Bacillati</taxon>
        <taxon>Bacillota</taxon>
        <taxon>Bacilli</taxon>
        <taxon>Bacillales</taxon>
        <taxon>Staphylococcaceae</taxon>
        <taxon>Staphylococcus</taxon>
    </lineage>
</organism>
<comment type="function">
    <text evidence="2">Component of the type VII secretion system (Ess). Required for the secretion of substrates including EsxA and EsxB. However, unable to support secretion of the substrate protein EsxC.</text>
</comment>
<comment type="subunit">
    <text evidence="2">Homooligomer. Interacts with EsaE.</text>
</comment>
<comment type="subcellular location">
    <subcellularLocation>
        <location evidence="2">Cell membrane</location>
        <topology evidence="3">Multi-pass membrane protein</topology>
    </subcellularLocation>
</comment>
<comment type="miscellaneous">
    <text evidence="5">This strain lacks esxB and esxC.</text>
</comment>
<comment type="similarity">
    <text evidence="5">Belongs to the EssC family.</text>
</comment>
<evidence type="ECO:0000250" key="1">
    <source>
        <dbReference type="UniProtKB" id="P0C048"/>
    </source>
</evidence>
<evidence type="ECO:0000250" key="2">
    <source>
        <dbReference type="UniProtKB" id="Q2G184"/>
    </source>
</evidence>
<evidence type="ECO:0000255" key="3"/>
<evidence type="ECO:0000255" key="4">
    <source>
        <dbReference type="PROSITE-ProRule" id="PRU00289"/>
    </source>
</evidence>
<evidence type="ECO:0000305" key="5"/>
<gene>
    <name evidence="1" type="primary">essC</name>
    <name type="ordered locus">SAR0284</name>
</gene>
<keyword id="KW-0067">ATP-binding</keyword>
<keyword id="KW-1003">Cell membrane</keyword>
<keyword id="KW-0472">Membrane</keyword>
<keyword id="KW-0547">Nucleotide-binding</keyword>
<keyword id="KW-0677">Repeat</keyword>
<keyword id="KW-0812">Transmembrane</keyword>
<keyword id="KW-1133">Transmembrane helix</keyword>
<keyword id="KW-0843">Virulence</keyword>
<reference key="1">
    <citation type="journal article" date="2004" name="Proc. Natl. Acad. Sci. U.S.A.">
        <title>Complete genomes of two clinical Staphylococcus aureus strains: evidence for the rapid evolution of virulence and drug resistance.</title>
        <authorList>
            <person name="Holden M.T.G."/>
            <person name="Feil E.J."/>
            <person name="Lindsay J.A."/>
            <person name="Peacock S.J."/>
            <person name="Day N.P.J."/>
            <person name="Enright M.C."/>
            <person name="Foster T.J."/>
            <person name="Moore C.E."/>
            <person name="Hurst L."/>
            <person name="Atkin R."/>
            <person name="Barron A."/>
            <person name="Bason N."/>
            <person name="Bentley S.D."/>
            <person name="Chillingworth C."/>
            <person name="Chillingworth T."/>
            <person name="Churcher C."/>
            <person name="Clark L."/>
            <person name="Corton C."/>
            <person name="Cronin A."/>
            <person name="Doggett J."/>
            <person name="Dowd L."/>
            <person name="Feltwell T."/>
            <person name="Hance Z."/>
            <person name="Harris B."/>
            <person name="Hauser H."/>
            <person name="Holroyd S."/>
            <person name="Jagels K."/>
            <person name="James K.D."/>
            <person name="Lennard N."/>
            <person name="Line A."/>
            <person name="Mayes R."/>
            <person name="Moule S."/>
            <person name="Mungall K."/>
            <person name="Ormond D."/>
            <person name="Quail M.A."/>
            <person name="Rabbinowitsch E."/>
            <person name="Rutherford K.M."/>
            <person name="Sanders M."/>
            <person name="Sharp S."/>
            <person name="Simmonds M."/>
            <person name="Stevens K."/>
            <person name="Whitehead S."/>
            <person name="Barrell B.G."/>
            <person name="Spratt B.G."/>
            <person name="Parkhill J."/>
        </authorList>
    </citation>
    <scope>NUCLEOTIDE SEQUENCE [LARGE SCALE GENOMIC DNA]</scope>
    <source>
        <strain>MRSA252</strain>
    </source>
</reference>
<protein>
    <recommendedName>
        <fullName evidence="1">Type VII secretion system protein EssC</fullName>
    </recommendedName>
</protein>
<sequence>MHKLIIKYNKQLKMLNLRDGKTYTISEDERADITLKSLGEVIHLEQNNQGTWQANHTSINKVLVRKGDLDDITLQLYTEADYASFAYPSIQDTMTIGSNAYDDMVIQSLMNAIIIKDFQSIQETQYVRIVHDKNTDVYINYELQEQLTNKAYIGDHIYVEGIWLEVQADGLNVLSQNTVASSLIRLTQEMPHAQADDYNTYHRSPRIIHREPTDDIKIERPPQPIQKNNTVIWRSIIPPLVMIALTVVIFLVRPIGIYILMMIGMSTVTIVFGITTYFSEKKKYNKDVEKREKDYKAYLDNKSKEINKAIKAQRFSLNYHYPTVAEIKDIVETKAPRIYEKTSHHHDFLHYKLGIANVEKSFKLDYQEEEFNQRRDELFDDAKELYEFYTDVEQAPLINDLNHGPIAYIGARHLILEELEKMLIQLSTFHSYHDLEFLFVTREDEVETLKWARWLPHMTLRGQNIRGFVYNQRTRDQILTSIYSMIKERIQAVRERSRSNEQIIFTPQLVFVITDMSLIIDHVILEYVNQDLSEYGISLIFVEDVIESLPEHVDTIIDIKSRTEGELITKEKELVQLKFTPENIDNVDKEYIARRLANLIHVEHLKNAIPDSITFLEMYNVKEVDQLDVVNRWRQNETYKTMAVPLGVRGKDDILSLNLHEKAHGPHGLVAGTTGSGKSEIIQSYILSLAINFHPHEVAFLLIDYKGGGMANLFKDLVHLVGTITNLDGDEAMRALTSIKAELRKRQRLFGEHDVNHINQYHKLFKEGVATEPMPHLFIISDEFAELKSEQPDFMKELVSTARIGRSLGIHLILATQKPSGVVDDQIWSNSKFKLALKVQDRQDSNEILKTPDAADITLPGRAYLQVGNNEIYELFQSAWSGATYDIEGDKLEVEDKTIYMINDYGQLQAINKDLSGLEDEETKENQTELEAVIDHIESITTRLEIEEVKRPWLPPLPENVYQEDLVETDFRKLWSDDAKEVELTLGLKDVPEEQYQGPMVLQLKKAGHIALIGSPGYGRTTFLHNIIFDVARHHRPDQAHMYLFDFGTNGLMPVTDIPHVADYFTVDQEDKIAKAIRKIHDIISERKRLLSQERVVNIEQYNKETGNSIPNVFLIIDNYDTVKESPFMEEYEEMMSKVTREGLALGVYIILSGSRSSAIKSAIFTNIKTRVALYLFENNELTNIIGSYKKGVKDVKGRAAINDDNFTQFQIAQPFELAEGQTYNERIKNEVAQMKEFYVGDYPKHIPMMPDKVFMEDIREAYDLEKIIHEEHKLPLGLDFEDVELVSLDLTSSSIVTAIKPTEMEKMNDVIMSSLSVYSKNQFVILVDAEDNMSQYSEDVTSYYSAPSDLSNIRLGFKQEIEARKNGEKSIEECKIVFINNIKRFNQLTGMTEDEIRVLFNEGQKVNIIIIASGLYSDTIGAFDRESKMMVRTINQALISHKISEQEFIRVKDRFGEPELKVGEMYYINNQEYQKIKLMEG</sequence>
<name>ESSC_STAAR</name>
<accession>Q6GK24</accession>
<feature type="chain" id="PRO_0000098332" description="Type VII secretion system protein EssC">
    <location>
        <begin position="1"/>
        <end position="1482"/>
    </location>
</feature>
<feature type="topological domain" description="Cytoplasmic" evidence="1">
    <location>
        <begin position="1"/>
        <end position="229"/>
    </location>
</feature>
<feature type="transmembrane region" description="Helical" evidence="3">
    <location>
        <begin position="230"/>
        <end position="252"/>
    </location>
</feature>
<feature type="topological domain" description="Extracellular" evidence="1">
    <location>
        <begin position="253"/>
        <end position="256"/>
    </location>
</feature>
<feature type="transmembrane region" description="Helical" evidence="3">
    <location>
        <begin position="257"/>
        <end position="279"/>
    </location>
</feature>
<feature type="topological domain" description="Cytoplasmic" evidence="1">
    <location>
        <begin position="280"/>
        <end position="1482"/>
    </location>
</feature>
<feature type="domain" description="FtsK 1" evidence="4">
    <location>
        <begin position="652"/>
        <end position="846"/>
    </location>
</feature>
<feature type="domain" description="FtsK 2" evidence="4">
    <location>
        <begin position="997"/>
        <end position="1183"/>
    </location>
</feature>
<feature type="binding site" evidence="4">
    <location>
        <begin position="672"/>
        <end position="679"/>
    </location>
    <ligand>
        <name>ATP</name>
        <dbReference type="ChEBI" id="CHEBI:30616"/>
    </ligand>
</feature>
<feature type="binding site" evidence="4">
    <location>
        <begin position="1014"/>
        <end position="1021"/>
    </location>
    <ligand>
        <name>ATP</name>
        <dbReference type="ChEBI" id="CHEBI:30616"/>
    </ligand>
</feature>